<reference key="1">
    <citation type="journal article" date="2009" name="Proc. Natl. Acad. Sci. U.S.A.">
        <title>The genomic basis of trophic strategy in marine bacteria.</title>
        <authorList>
            <person name="Lauro F.M."/>
            <person name="McDougald D."/>
            <person name="Thomas T."/>
            <person name="Williams T.J."/>
            <person name="Egan S."/>
            <person name="Rice S."/>
            <person name="DeMaere M.Z."/>
            <person name="Ting L."/>
            <person name="Ertan H."/>
            <person name="Johnson J."/>
            <person name="Ferriera S."/>
            <person name="Lapidus A."/>
            <person name="Anderson I."/>
            <person name="Kyrpides N."/>
            <person name="Munk A.C."/>
            <person name="Detter C."/>
            <person name="Han C.S."/>
            <person name="Brown M.V."/>
            <person name="Robb F.T."/>
            <person name="Kjelleberg S."/>
            <person name="Cavicchioli R."/>
        </authorList>
    </citation>
    <scope>NUCLEOTIDE SEQUENCE [LARGE SCALE GENOMIC DNA]</scope>
    <source>
        <strain>DSM 13593 / LMG 18877 / RB2256</strain>
    </source>
</reference>
<accession>Q1GU13</accession>
<comment type="function">
    <text evidence="1">Part of the twin-arginine translocation (Tat) system that transports large folded proteins containing a characteristic twin-arginine motif in their signal peptide across membranes. TatA could form the protein-conducting channel of the Tat system.</text>
</comment>
<comment type="subunit">
    <text evidence="1">The Tat system comprises two distinct complexes: a TatABC complex, containing multiple copies of TatA, TatB and TatC subunits, and a separate TatA complex, containing only TatA subunits. Substrates initially bind to the TatABC complex, which probably triggers association of the separate TatA complex to form the active translocon.</text>
</comment>
<comment type="subcellular location">
    <subcellularLocation>
        <location evidence="1">Cell inner membrane</location>
        <topology evidence="1">Single-pass membrane protein</topology>
    </subcellularLocation>
</comment>
<comment type="similarity">
    <text evidence="1">Belongs to the TatA/E family.</text>
</comment>
<protein>
    <recommendedName>
        <fullName evidence="1">Sec-independent protein translocase protein TatA</fullName>
    </recommendedName>
</protein>
<evidence type="ECO:0000255" key="1">
    <source>
        <dbReference type="HAMAP-Rule" id="MF_00236"/>
    </source>
</evidence>
<evidence type="ECO:0000256" key="2">
    <source>
        <dbReference type="SAM" id="MobiDB-lite"/>
    </source>
</evidence>
<feature type="chain" id="PRO_1000044451" description="Sec-independent protein translocase protein TatA">
    <location>
        <begin position="1"/>
        <end position="77"/>
    </location>
</feature>
<feature type="transmembrane region" description="Helical" evidence="1">
    <location>
        <begin position="1"/>
        <end position="21"/>
    </location>
</feature>
<feature type="region of interest" description="Disordered" evidence="2">
    <location>
        <begin position="41"/>
        <end position="77"/>
    </location>
</feature>
<feature type="compositionally biased region" description="Polar residues" evidence="2">
    <location>
        <begin position="66"/>
        <end position="77"/>
    </location>
</feature>
<proteinExistence type="inferred from homology"/>
<organism>
    <name type="scientific">Sphingopyxis alaskensis (strain DSM 13593 / LMG 18877 / RB2256)</name>
    <name type="common">Sphingomonas alaskensis</name>
    <dbReference type="NCBI Taxonomy" id="317655"/>
    <lineage>
        <taxon>Bacteria</taxon>
        <taxon>Pseudomonadati</taxon>
        <taxon>Pseudomonadota</taxon>
        <taxon>Alphaproteobacteria</taxon>
        <taxon>Sphingomonadales</taxon>
        <taxon>Sphingomonadaceae</taxon>
        <taxon>Sphingopyxis</taxon>
    </lineage>
</organism>
<sequence length="77" mass="8363">MGSFSIWHWLVVGILVLLLFGKGRFSDMMGDVAKGIKSFKKGMSEDDAPTPAPKQIDAQRAPDLSATPTPTAETENR</sequence>
<keyword id="KW-0997">Cell inner membrane</keyword>
<keyword id="KW-1003">Cell membrane</keyword>
<keyword id="KW-0472">Membrane</keyword>
<keyword id="KW-0653">Protein transport</keyword>
<keyword id="KW-1185">Reference proteome</keyword>
<keyword id="KW-0811">Translocation</keyword>
<keyword id="KW-0812">Transmembrane</keyword>
<keyword id="KW-1133">Transmembrane helix</keyword>
<keyword id="KW-0813">Transport</keyword>
<gene>
    <name evidence="1" type="primary">tatA</name>
    <name type="ordered locus">Sala_1143</name>
</gene>
<dbReference type="EMBL" id="CP000356">
    <property type="protein sequence ID" value="ABF52859.1"/>
    <property type="molecule type" value="Genomic_DNA"/>
</dbReference>
<dbReference type="RefSeq" id="WP_011541444.1">
    <property type="nucleotide sequence ID" value="NC_008048.1"/>
</dbReference>
<dbReference type="SMR" id="Q1GU13"/>
<dbReference type="STRING" id="317655.Sala_1143"/>
<dbReference type="KEGG" id="sal:Sala_1143"/>
<dbReference type="eggNOG" id="COG1826">
    <property type="taxonomic scope" value="Bacteria"/>
</dbReference>
<dbReference type="HOGENOM" id="CLU_086034_5_0_5"/>
<dbReference type="OrthoDB" id="7161179at2"/>
<dbReference type="Proteomes" id="UP000006578">
    <property type="component" value="Chromosome"/>
</dbReference>
<dbReference type="GO" id="GO:0033281">
    <property type="term" value="C:TAT protein transport complex"/>
    <property type="evidence" value="ECO:0007669"/>
    <property type="project" value="UniProtKB-UniRule"/>
</dbReference>
<dbReference type="GO" id="GO:0008320">
    <property type="term" value="F:protein transmembrane transporter activity"/>
    <property type="evidence" value="ECO:0007669"/>
    <property type="project" value="UniProtKB-UniRule"/>
</dbReference>
<dbReference type="GO" id="GO:0043953">
    <property type="term" value="P:protein transport by the Tat complex"/>
    <property type="evidence" value="ECO:0007669"/>
    <property type="project" value="UniProtKB-UniRule"/>
</dbReference>
<dbReference type="Gene3D" id="1.20.5.3310">
    <property type="match status" value="1"/>
</dbReference>
<dbReference type="HAMAP" id="MF_00236">
    <property type="entry name" value="TatA_E"/>
    <property type="match status" value="1"/>
</dbReference>
<dbReference type="InterPro" id="IPR003369">
    <property type="entry name" value="TatA/B/E"/>
</dbReference>
<dbReference type="InterPro" id="IPR006312">
    <property type="entry name" value="TatA/E"/>
</dbReference>
<dbReference type="NCBIfam" id="NF001940">
    <property type="entry name" value="PRK00720.1"/>
    <property type="match status" value="1"/>
</dbReference>
<dbReference type="NCBIfam" id="TIGR01411">
    <property type="entry name" value="tatAE"/>
    <property type="match status" value="1"/>
</dbReference>
<dbReference type="PANTHER" id="PTHR42982">
    <property type="entry name" value="SEC-INDEPENDENT PROTEIN TRANSLOCASE PROTEIN TATA"/>
    <property type="match status" value="1"/>
</dbReference>
<dbReference type="PANTHER" id="PTHR42982:SF1">
    <property type="entry name" value="SEC-INDEPENDENT PROTEIN TRANSLOCASE PROTEIN TATA"/>
    <property type="match status" value="1"/>
</dbReference>
<dbReference type="Pfam" id="PF02416">
    <property type="entry name" value="TatA_B_E"/>
    <property type="match status" value="1"/>
</dbReference>
<name>TATA_SPHAL</name>